<gene>
    <name evidence="8" type="primary">Cds2</name>
</gene>
<organism>
    <name type="scientific">Mus musculus</name>
    <name type="common">Mouse</name>
    <dbReference type="NCBI Taxonomy" id="10090"/>
    <lineage>
        <taxon>Eukaryota</taxon>
        <taxon>Metazoa</taxon>
        <taxon>Chordata</taxon>
        <taxon>Craniata</taxon>
        <taxon>Vertebrata</taxon>
        <taxon>Euteleostomi</taxon>
        <taxon>Mammalia</taxon>
        <taxon>Eutheria</taxon>
        <taxon>Euarchontoglires</taxon>
        <taxon>Glires</taxon>
        <taxon>Rodentia</taxon>
        <taxon>Myomorpha</taxon>
        <taxon>Muroidea</taxon>
        <taxon>Muridae</taxon>
        <taxon>Murinae</taxon>
        <taxon>Mus</taxon>
        <taxon>Mus</taxon>
    </lineage>
</organism>
<name>CDS2_MOUSE</name>
<evidence type="ECO:0000250" key="1">
    <source>
        <dbReference type="UniProtKB" id="O95674"/>
    </source>
</evidence>
<evidence type="ECO:0000250" key="2">
    <source>
        <dbReference type="UniProtKB" id="Q91XU8"/>
    </source>
</evidence>
<evidence type="ECO:0000255" key="3"/>
<evidence type="ECO:0000256" key="4">
    <source>
        <dbReference type="SAM" id="MobiDB-lite"/>
    </source>
</evidence>
<evidence type="ECO:0000269" key="5">
    <source>
    </source>
</evidence>
<evidence type="ECO:0000269" key="6">
    <source>
    </source>
</evidence>
<evidence type="ECO:0000305" key="7"/>
<evidence type="ECO:0000312" key="8">
    <source>
        <dbReference type="MGI" id="MGI:1332236"/>
    </source>
</evidence>
<evidence type="ECO:0007744" key="9">
    <source>
    </source>
</evidence>
<evidence type="ECO:0007744" key="10">
    <source>
    </source>
</evidence>
<evidence type="ECO:0007744" key="11">
    <source>
    </source>
</evidence>
<evidence type="ECO:0007744" key="12">
    <source>
    </source>
</evidence>
<keyword id="KW-0256">Endoplasmic reticulum</keyword>
<keyword id="KW-0444">Lipid biosynthesis</keyword>
<keyword id="KW-0443">Lipid metabolism</keyword>
<keyword id="KW-0472">Membrane</keyword>
<keyword id="KW-0548">Nucleotidyltransferase</keyword>
<keyword id="KW-0594">Phospholipid biosynthesis</keyword>
<keyword id="KW-1208">Phospholipid metabolism</keyword>
<keyword id="KW-0597">Phosphoprotein</keyword>
<keyword id="KW-1185">Reference proteome</keyword>
<keyword id="KW-0808">Transferase</keyword>
<keyword id="KW-0812">Transmembrane</keyword>
<keyword id="KW-1133">Transmembrane helix</keyword>
<feature type="chain" id="PRO_0000090717" description="Phosphatidate cytidylyltransferase 2">
    <location>
        <begin position="1"/>
        <end position="444"/>
    </location>
</feature>
<feature type="transmembrane region" description="Helical" evidence="3">
    <location>
        <begin position="78"/>
        <end position="98"/>
    </location>
</feature>
<feature type="transmembrane region" description="Helical" evidence="3">
    <location>
        <begin position="129"/>
        <end position="149"/>
    </location>
</feature>
<feature type="transmembrane region" description="Helical" evidence="3">
    <location>
        <begin position="165"/>
        <end position="185"/>
    </location>
</feature>
<feature type="transmembrane region" description="Helical" evidence="3">
    <location>
        <begin position="212"/>
        <end position="232"/>
    </location>
</feature>
<feature type="transmembrane region" description="Helical" evidence="3">
    <location>
        <begin position="261"/>
        <end position="281"/>
    </location>
</feature>
<feature type="transmembrane region" description="Helical" evidence="3">
    <location>
        <begin position="339"/>
        <end position="359"/>
    </location>
</feature>
<feature type="region of interest" description="Disordered" evidence="4">
    <location>
        <begin position="1"/>
        <end position="48"/>
    </location>
</feature>
<feature type="compositionally biased region" description="Basic and acidic residues" evidence="4">
    <location>
        <begin position="1"/>
        <end position="38"/>
    </location>
</feature>
<feature type="modified residue" description="Phosphoserine" evidence="1">
    <location>
        <position position="20"/>
    </location>
</feature>
<feature type="modified residue" description="Phosphothreonine" evidence="1">
    <location>
        <position position="30"/>
    </location>
</feature>
<feature type="modified residue" description="Phosphoserine" evidence="9 10 11 12">
    <location>
        <position position="32"/>
    </location>
</feature>
<feature type="modified residue" description="Phosphoserine" evidence="1">
    <location>
        <position position="34"/>
    </location>
</feature>
<feature type="modified residue" description="Phosphoserine" evidence="12">
    <location>
        <position position="36"/>
    </location>
</feature>
<feature type="modified residue" description="Phosphothreonine" evidence="12">
    <location>
        <position position="50"/>
    </location>
</feature>
<feature type="sequence conflict" description="In Ref. 3; AAH69879." evidence="7" ref="3">
    <original>L</original>
    <variation>P</variation>
    <location>
        <position position="43"/>
    </location>
</feature>
<accession>Q99L43</accession>
<accession>Q3TMD1</accession>
<accession>Q6NSU1</accession>
<protein>
    <recommendedName>
        <fullName evidence="7">Phosphatidate cytidylyltransferase 2</fullName>
        <ecNumber evidence="1">2.7.7.41</ecNumber>
    </recommendedName>
    <alternativeName>
        <fullName>CDP-DAG synthase 2</fullName>
    </alternativeName>
    <alternativeName>
        <fullName>CDP-DG synthase 2</fullName>
    </alternativeName>
    <alternativeName>
        <fullName>CDP-diacylglycerol synthase 2</fullName>
        <shortName>CDS 2</shortName>
    </alternativeName>
    <alternativeName>
        <fullName>CDP-diglyceride pyrophosphorylase 2</fullName>
    </alternativeName>
    <alternativeName>
        <fullName>CDP-diglyceride synthase 2</fullName>
    </alternativeName>
    <alternativeName>
        <fullName>CTP:phosphatidate cytidylyltransferase 2</fullName>
    </alternativeName>
</protein>
<sequence length="444" mass="51314">MTELRQRVVREDAPPEDKESESEAKLDGETASDSESRAETAPLPTSVDDTPEVLNRALSNLSSRWKNWWVRGILTLAMIAFFFIIIYLGPMVLMMIVMCVQIKCFHEIITIGYNVYHSYDLPWFRTLSWYFLLCVNYFFYGETVTDYFFTLVQREEPLRILSKYHRFISFALYLTGFCMFVLSLVKKHYRLQFYMFGWTHVTLLIVVTQSHLVIHNLFEGMIWFIVPISCVICNDIMAYMFGFFFGRTPLIKLSPKKTWEGFIGGFFATVVFGLLLSYVMSGYRCFVCPVEYNNDTNSFTVDCEPSDLFRLQEYNIPGVIQSAIGWKTVRMYPFQIHSIALSTFASLIGPFGGFFASGFKRAFKIKDFANTIPGHGGIMDRFDCQYLMATFVNVYIASFIRGPNPSKLIQQFLTLRPDQQLHIFNTLKSHLTDKGILTSALEDE</sequence>
<comment type="function">
    <text evidence="1 6">Catalyzes the conversion of phosphatidic acid (PA) to CDP-diacylglycerol (CDP-DAG), an essential intermediate in the synthesis of phosphatidylglycerol, cardiolipin and phosphatidylinositol (By similarity). Exhibits specificity for the nature of the acyl chains at the sn-1 and sn-2 positions in the substrate, PA and the preferred acyl chain composition is 1-stearoyl-2-arachidonoyl-sn-phosphatidic acid (By similarity). Plays an important role in regulating the growth and maturation of lipid droplets which are storage organelles at the center of lipid and energy homeostasis (PubMed:26946540).</text>
</comment>
<comment type="catalytic activity">
    <reaction evidence="1">
        <text>a 1,2-diacyl-sn-glycero-3-phosphate + CTP + H(+) = a CDP-1,2-diacyl-sn-glycerol + diphosphate</text>
        <dbReference type="Rhea" id="RHEA:16229"/>
        <dbReference type="ChEBI" id="CHEBI:15378"/>
        <dbReference type="ChEBI" id="CHEBI:33019"/>
        <dbReference type="ChEBI" id="CHEBI:37563"/>
        <dbReference type="ChEBI" id="CHEBI:58332"/>
        <dbReference type="ChEBI" id="CHEBI:58608"/>
        <dbReference type="EC" id="2.7.7.41"/>
    </reaction>
    <physiologicalReaction direction="left-to-right" evidence="1">
        <dbReference type="Rhea" id="RHEA:16230"/>
    </physiologicalReaction>
</comment>
<comment type="catalytic activity">
    <reaction evidence="1">
        <text>1-octadecanoyl-2-(5Z,8Z,11Z,14Z-eicosatetraenoyl)-sn-glycero-3-phosphate + CTP + H(+) = 1-octadecanoyl-2-(5Z,8Z,11Z,14Z-eicosatetraenoyl)-sn-glycero-3-cytidine-5'-diphosphate + diphosphate</text>
        <dbReference type="Rhea" id="RHEA:45648"/>
        <dbReference type="ChEBI" id="CHEBI:15378"/>
        <dbReference type="ChEBI" id="CHEBI:33019"/>
        <dbReference type="ChEBI" id="CHEBI:37563"/>
        <dbReference type="ChEBI" id="CHEBI:77091"/>
        <dbReference type="ChEBI" id="CHEBI:85349"/>
    </reaction>
    <physiologicalReaction direction="left-to-right" evidence="1">
        <dbReference type="Rhea" id="RHEA:45649"/>
    </physiologicalReaction>
</comment>
<comment type="catalytic activity">
    <reaction evidence="1">
        <text>1-octadecanoyl-2-(9Z,12Z-octadecadienoyl)-sn-glycero-3-phosphate + CTP + H(+) = 1-octadecanoyl-2-(9Z,12Z-octadecadienoyl)-sn-glycero-3-cytidine-5'-diphosphate + diphosphate</text>
        <dbReference type="Rhea" id="RHEA:45660"/>
        <dbReference type="ChEBI" id="CHEBI:15378"/>
        <dbReference type="ChEBI" id="CHEBI:33019"/>
        <dbReference type="ChEBI" id="CHEBI:37563"/>
        <dbReference type="ChEBI" id="CHEBI:77098"/>
        <dbReference type="ChEBI" id="CHEBI:85352"/>
    </reaction>
    <physiologicalReaction direction="left-to-right" evidence="1">
        <dbReference type="Rhea" id="RHEA:45661"/>
    </physiologicalReaction>
</comment>
<comment type="catalytic activity">
    <reaction evidence="1">
        <text>1-hexadecanoyl-2-(5Z,8Z,11Z,14Z-eicosatetraenoyl)-sn-glycero-3-phosphate + CTP + H(+) = 1-hexadecanoyl-2-(5Z,8Z,11Z,14Z-eicosatetraenoyl)-sn-glycero-3-cytidine-5'-diphosphate + diphosphate</text>
        <dbReference type="Rhea" id="RHEA:45652"/>
        <dbReference type="ChEBI" id="CHEBI:15378"/>
        <dbReference type="ChEBI" id="CHEBI:33019"/>
        <dbReference type="ChEBI" id="CHEBI:37563"/>
        <dbReference type="ChEBI" id="CHEBI:72864"/>
        <dbReference type="ChEBI" id="CHEBI:85350"/>
    </reaction>
    <physiologicalReaction direction="left-to-right" evidence="1">
        <dbReference type="Rhea" id="RHEA:45653"/>
    </physiologicalReaction>
</comment>
<comment type="catalytic activity">
    <reaction evidence="1">
        <text>1,2-di-(5Z,8Z,11Z,14Z)-eicosatetraenoyl-sn-glycero-3-phosphate + CTP + H(+) = 1,2-di-(5Z,8Z,11Z,14Z-eicosatetraenoyl)-sn-glycero-3-cytidine-5'-diphosphate + diphosphate</text>
        <dbReference type="Rhea" id="RHEA:45656"/>
        <dbReference type="ChEBI" id="CHEBI:15378"/>
        <dbReference type="ChEBI" id="CHEBI:33019"/>
        <dbReference type="ChEBI" id="CHEBI:37563"/>
        <dbReference type="ChEBI" id="CHEBI:77126"/>
        <dbReference type="ChEBI" id="CHEBI:85351"/>
    </reaction>
    <physiologicalReaction direction="left-to-right" evidence="1">
        <dbReference type="Rhea" id="RHEA:45657"/>
    </physiologicalReaction>
</comment>
<comment type="catalytic activity">
    <reaction evidence="1">
        <text>1-octadecanoyl-2-(9Z-octadecenoyl)-sn-glycero-3-phosphate + CTP + H(+) = 1-octadecanoyl-2-(9Z-octadecenoyl)-sn-glycero-3-cytidine-5'-diphosphate + diphosphate</text>
        <dbReference type="Rhea" id="RHEA:45664"/>
        <dbReference type="ChEBI" id="CHEBI:15378"/>
        <dbReference type="ChEBI" id="CHEBI:33019"/>
        <dbReference type="ChEBI" id="CHEBI:37563"/>
        <dbReference type="ChEBI" id="CHEBI:74560"/>
        <dbReference type="ChEBI" id="CHEBI:85353"/>
    </reaction>
    <physiologicalReaction direction="left-to-right" evidence="1">
        <dbReference type="Rhea" id="RHEA:45665"/>
    </physiologicalReaction>
</comment>
<comment type="catalytic activity">
    <reaction evidence="1">
        <text>1-octadecanoyl-2-(4Z,7Z,10Z,13Z,16Z,19Z-docosahexaenoyl)-sn-glycero-3-phosphate + CTP + H(+) = 1-octadecanoyl-2-(4Z,7Z,10Z,13Z,16Z,19Z-docosahexaenoyl)-sn-glycero-3-cytidine-5'-diphosphate + diphosphate</text>
        <dbReference type="Rhea" id="RHEA:45668"/>
        <dbReference type="ChEBI" id="CHEBI:15378"/>
        <dbReference type="ChEBI" id="CHEBI:33019"/>
        <dbReference type="ChEBI" id="CHEBI:37563"/>
        <dbReference type="ChEBI" id="CHEBI:77130"/>
        <dbReference type="ChEBI" id="CHEBI:85354"/>
    </reaction>
    <physiologicalReaction direction="left-to-right" evidence="1">
        <dbReference type="Rhea" id="RHEA:45669"/>
    </physiologicalReaction>
</comment>
<comment type="catalytic activity">
    <reaction evidence="1">
        <text>1,2-di-(9Z,12Z-octadecadienoyl)-sn-glycero-3-phosphate + CTP + H(+) = 1,2-di-(9Z,12Z-octadecadienoyl)-sn-glycero-3-cytidine-5'-diphosphate + diphosphate</text>
        <dbReference type="Rhea" id="RHEA:45672"/>
        <dbReference type="ChEBI" id="CHEBI:15378"/>
        <dbReference type="ChEBI" id="CHEBI:33019"/>
        <dbReference type="ChEBI" id="CHEBI:37563"/>
        <dbReference type="ChEBI" id="CHEBI:77128"/>
        <dbReference type="ChEBI" id="CHEBI:85355"/>
    </reaction>
    <physiologicalReaction direction="left-to-right" evidence="1">
        <dbReference type="Rhea" id="RHEA:45673"/>
    </physiologicalReaction>
</comment>
<comment type="catalytic activity">
    <reaction evidence="1">
        <text>1,2-di-(9Z-octadecenoyl)-sn-glycero-3-phosphate + CTP + H(+) = 1,2-di-(9Z-octadecenoyl)-sn-glycero-3-cytidine-5'-diphosphate + diphosphate</text>
        <dbReference type="Rhea" id="RHEA:45676"/>
        <dbReference type="ChEBI" id="CHEBI:15378"/>
        <dbReference type="ChEBI" id="CHEBI:33019"/>
        <dbReference type="ChEBI" id="CHEBI:37563"/>
        <dbReference type="ChEBI" id="CHEBI:74546"/>
        <dbReference type="ChEBI" id="CHEBI:85356"/>
    </reaction>
    <physiologicalReaction direction="left-to-right" evidence="1">
        <dbReference type="Rhea" id="RHEA:45677"/>
    </physiologicalReaction>
</comment>
<comment type="pathway">
    <text>Phospholipid metabolism; CDP-diacylglycerol biosynthesis; CDP-diacylglycerol from sn-glycerol 3-phosphate: step 3/3.</text>
</comment>
<comment type="subunit">
    <text evidence="2">Homodimer.</text>
</comment>
<comment type="subcellular location">
    <subcellularLocation>
        <location evidence="5">Endoplasmic reticulum membrane</location>
        <topology evidence="3">Multi-pass membrane protein</topology>
    </subcellularLocation>
</comment>
<comment type="tissue specificity">
    <text evidence="5">Ubiquitous. Expressed in the ganglion cell layer and inner nuclear layer of the retina.</text>
</comment>
<comment type="similarity">
    <text evidence="7">Belongs to the CDS family.</text>
</comment>
<dbReference type="EC" id="2.7.7.41" evidence="1"/>
<dbReference type="EMBL" id="AY159802">
    <property type="protein sequence ID" value="AAO17790.1"/>
    <property type="molecule type" value="mRNA"/>
</dbReference>
<dbReference type="EMBL" id="AK036328">
    <property type="protein sequence ID" value="BAC29384.1"/>
    <property type="molecule type" value="mRNA"/>
</dbReference>
<dbReference type="EMBL" id="AK147541">
    <property type="protein sequence ID" value="BAE27984.1"/>
    <property type="molecule type" value="mRNA"/>
</dbReference>
<dbReference type="EMBL" id="AK166001">
    <property type="protein sequence ID" value="BAE38511.1"/>
    <property type="molecule type" value="mRNA"/>
</dbReference>
<dbReference type="EMBL" id="BC003852">
    <property type="protein sequence ID" value="AAH03852.1"/>
    <property type="molecule type" value="mRNA"/>
</dbReference>
<dbReference type="EMBL" id="BC069879">
    <property type="protein sequence ID" value="AAH69879.1"/>
    <property type="molecule type" value="mRNA"/>
</dbReference>
<dbReference type="CCDS" id="CCDS16772.1"/>
<dbReference type="RefSeq" id="NP_001277968.1">
    <property type="nucleotide sequence ID" value="NM_001291039.1"/>
</dbReference>
<dbReference type="RefSeq" id="NP_619592.1">
    <property type="nucleotide sequence ID" value="NM_138651.7"/>
</dbReference>
<dbReference type="BioGRID" id="226008">
    <property type="interactions" value="12"/>
</dbReference>
<dbReference type="FunCoup" id="Q99L43">
    <property type="interactions" value="3139"/>
</dbReference>
<dbReference type="IntAct" id="Q99L43">
    <property type="interactions" value="1"/>
</dbReference>
<dbReference type="MINT" id="Q99L43"/>
<dbReference type="STRING" id="10090.ENSMUSP00000099470"/>
<dbReference type="GlyConnect" id="2581">
    <property type="glycosylation" value="1 N-Linked glycan (1 site)"/>
</dbReference>
<dbReference type="GlyCosmos" id="Q99L43">
    <property type="glycosylation" value="1 site, 1 glycan"/>
</dbReference>
<dbReference type="GlyGen" id="Q99L43">
    <property type="glycosylation" value="3 sites, 3 N-linked glycans (2 sites), 1 O-linked glycan (1 site)"/>
</dbReference>
<dbReference type="iPTMnet" id="Q99L43"/>
<dbReference type="PhosphoSitePlus" id="Q99L43"/>
<dbReference type="SwissPalm" id="Q99L43"/>
<dbReference type="jPOST" id="Q99L43"/>
<dbReference type="PaxDb" id="10090-ENSMUSP00000099470"/>
<dbReference type="PeptideAtlas" id="Q99L43"/>
<dbReference type="ProteomicsDB" id="281301"/>
<dbReference type="Pumba" id="Q99L43"/>
<dbReference type="Antibodypedia" id="8142">
    <property type="antibodies" value="149 antibodies from 23 providers"/>
</dbReference>
<dbReference type="DNASU" id="110911"/>
<dbReference type="Ensembl" id="ENSMUST00000103181.11">
    <property type="protein sequence ID" value="ENSMUSP00000099470.5"/>
    <property type="gene ID" value="ENSMUSG00000058793.15"/>
</dbReference>
<dbReference type="GeneID" id="110911"/>
<dbReference type="KEGG" id="mmu:110911"/>
<dbReference type="UCSC" id="uc008mmo.2">
    <property type="organism name" value="mouse"/>
</dbReference>
<dbReference type="AGR" id="MGI:1332236"/>
<dbReference type="CTD" id="8760"/>
<dbReference type="MGI" id="MGI:1332236">
    <property type="gene designation" value="Cds2"/>
</dbReference>
<dbReference type="VEuPathDB" id="HostDB:ENSMUSG00000058793"/>
<dbReference type="eggNOG" id="KOG1440">
    <property type="taxonomic scope" value="Eukaryota"/>
</dbReference>
<dbReference type="GeneTree" id="ENSGT00940000158877"/>
<dbReference type="InParanoid" id="Q99L43"/>
<dbReference type="OMA" id="FVIESTM"/>
<dbReference type="OrthoDB" id="10260889at2759"/>
<dbReference type="PhylomeDB" id="Q99L43"/>
<dbReference type="TreeFam" id="TF313464"/>
<dbReference type="BRENDA" id="2.7.7.41">
    <property type="organism ID" value="3474"/>
</dbReference>
<dbReference type="Reactome" id="R-MMU-1483148">
    <property type="pathway name" value="Synthesis of PG"/>
</dbReference>
<dbReference type="UniPathway" id="UPA00557">
    <property type="reaction ID" value="UER00614"/>
</dbReference>
<dbReference type="BioGRID-ORCS" id="110911">
    <property type="hits" value="27 hits in 82 CRISPR screens"/>
</dbReference>
<dbReference type="ChiTaRS" id="Cds2">
    <property type="organism name" value="mouse"/>
</dbReference>
<dbReference type="PRO" id="PR:Q99L43"/>
<dbReference type="Proteomes" id="UP000000589">
    <property type="component" value="Chromosome 2"/>
</dbReference>
<dbReference type="RNAct" id="Q99L43">
    <property type="molecule type" value="protein"/>
</dbReference>
<dbReference type="Bgee" id="ENSMUSG00000058793">
    <property type="expression patterns" value="Expressed in motor neuron and 259 other cell types or tissues"/>
</dbReference>
<dbReference type="ExpressionAtlas" id="Q99L43">
    <property type="expression patterns" value="baseline and differential"/>
</dbReference>
<dbReference type="GO" id="GO:0005783">
    <property type="term" value="C:endoplasmic reticulum"/>
    <property type="evidence" value="ECO:0000314"/>
    <property type="project" value="MGI"/>
</dbReference>
<dbReference type="GO" id="GO:0005789">
    <property type="term" value="C:endoplasmic reticulum membrane"/>
    <property type="evidence" value="ECO:0007669"/>
    <property type="project" value="UniProtKB-SubCell"/>
</dbReference>
<dbReference type="GO" id="GO:0016020">
    <property type="term" value="C:membrane"/>
    <property type="evidence" value="ECO:0000250"/>
    <property type="project" value="UniProtKB"/>
</dbReference>
<dbReference type="GO" id="GO:0004605">
    <property type="term" value="F:phosphatidate cytidylyltransferase activity"/>
    <property type="evidence" value="ECO:0000250"/>
    <property type="project" value="UniProtKB"/>
</dbReference>
<dbReference type="GO" id="GO:0016024">
    <property type="term" value="P:CDP-diacylglycerol biosynthetic process"/>
    <property type="evidence" value="ECO:0000250"/>
    <property type="project" value="UniProtKB"/>
</dbReference>
<dbReference type="GO" id="GO:0070085">
    <property type="term" value="P:glycosylation"/>
    <property type="evidence" value="ECO:0000303"/>
    <property type="project" value="BHF-UCL"/>
</dbReference>
<dbReference type="GO" id="GO:0140042">
    <property type="term" value="P:lipid droplet formation"/>
    <property type="evidence" value="ECO:0000315"/>
    <property type="project" value="UniProtKB"/>
</dbReference>
<dbReference type="GO" id="GO:0007602">
    <property type="term" value="P:phototransduction"/>
    <property type="evidence" value="ECO:0000304"/>
    <property type="project" value="BHF-UCL"/>
</dbReference>
<dbReference type="InterPro" id="IPR000374">
    <property type="entry name" value="PC_trans"/>
</dbReference>
<dbReference type="InterPro" id="IPR016720">
    <property type="entry name" value="PC_Trfase_euk"/>
</dbReference>
<dbReference type="PANTHER" id="PTHR13773">
    <property type="entry name" value="PHOSPHATIDATE CYTIDYLYLTRANSFERASE"/>
    <property type="match status" value="1"/>
</dbReference>
<dbReference type="PANTHER" id="PTHR13773:SF4">
    <property type="entry name" value="PHOSPHATIDATE CYTIDYLYLTRANSFERASE 2"/>
    <property type="match status" value="1"/>
</dbReference>
<dbReference type="Pfam" id="PF01148">
    <property type="entry name" value="CTP_transf_1"/>
    <property type="match status" value="1"/>
</dbReference>
<dbReference type="PIRSF" id="PIRSF018269">
    <property type="entry name" value="PC_trans_euk"/>
    <property type="match status" value="1"/>
</dbReference>
<dbReference type="PROSITE" id="PS01315">
    <property type="entry name" value="CDS"/>
    <property type="match status" value="1"/>
</dbReference>
<proteinExistence type="evidence at protein level"/>
<reference key="1">
    <citation type="journal article" date="2005" name="Gene">
        <title>Isolation and characterization of murine Cds (CDP-diacylglycerol synthase) 1 and 2.</title>
        <authorList>
            <person name="Inglis-Broadgate S.L."/>
            <person name="Ocaka L."/>
            <person name="Banerjee R."/>
            <person name="Gaasenbeek M."/>
            <person name="Chapple J.P."/>
            <person name="Cheetham M.E."/>
            <person name="Clark B.J."/>
            <person name="Hunt D.M."/>
            <person name="Halford S."/>
        </authorList>
    </citation>
    <scope>NUCLEOTIDE SEQUENCE [MRNA]</scope>
    <scope>SUBCELLULAR LOCATION</scope>
    <scope>TISSUE SPECIFICITY</scope>
    <source>
        <strain>C57BL/6J</strain>
    </source>
</reference>
<reference key="2">
    <citation type="journal article" date="2005" name="Science">
        <title>The transcriptional landscape of the mammalian genome.</title>
        <authorList>
            <person name="Carninci P."/>
            <person name="Kasukawa T."/>
            <person name="Katayama S."/>
            <person name="Gough J."/>
            <person name="Frith M.C."/>
            <person name="Maeda N."/>
            <person name="Oyama R."/>
            <person name="Ravasi T."/>
            <person name="Lenhard B."/>
            <person name="Wells C."/>
            <person name="Kodzius R."/>
            <person name="Shimokawa K."/>
            <person name="Bajic V.B."/>
            <person name="Brenner S.E."/>
            <person name="Batalov S."/>
            <person name="Forrest A.R."/>
            <person name="Zavolan M."/>
            <person name="Davis M.J."/>
            <person name="Wilming L.G."/>
            <person name="Aidinis V."/>
            <person name="Allen J.E."/>
            <person name="Ambesi-Impiombato A."/>
            <person name="Apweiler R."/>
            <person name="Aturaliya R.N."/>
            <person name="Bailey T.L."/>
            <person name="Bansal M."/>
            <person name="Baxter L."/>
            <person name="Beisel K.W."/>
            <person name="Bersano T."/>
            <person name="Bono H."/>
            <person name="Chalk A.M."/>
            <person name="Chiu K.P."/>
            <person name="Choudhary V."/>
            <person name="Christoffels A."/>
            <person name="Clutterbuck D.R."/>
            <person name="Crowe M.L."/>
            <person name="Dalla E."/>
            <person name="Dalrymple B.P."/>
            <person name="de Bono B."/>
            <person name="Della Gatta G."/>
            <person name="di Bernardo D."/>
            <person name="Down T."/>
            <person name="Engstrom P."/>
            <person name="Fagiolini M."/>
            <person name="Faulkner G."/>
            <person name="Fletcher C.F."/>
            <person name="Fukushima T."/>
            <person name="Furuno M."/>
            <person name="Futaki S."/>
            <person name="Gariboldi M."/>
            <person name="Georgii-Hemming P."/>
            <person name="Gingeras T.R."/>
            <person name="Gojobori T."/>
            <person name="Green R.E."/>
            <person name="Gustincich S."/>
            <person name="Harbers M."/>
            <person name="Hayashi Y."/>
            <person name="Hensch T.K."/>
            <person name="Hirokawa N."/>
            <person name="Hill D."/>
            <person name="Huminiecki L."/>
            <person name="Iacono M."/>
            <person name="Ikeo K."/>
            <person name="Iwama A."/>
            <person name="Ishikawa T."/>
            <person name="Jakt M."/>
            <person name="Kanapin A."/>
            <person name="Katoh M."/>
            <person name="Kawasawa Y."/>
            <person name="Kelso J."/>
            <person name="Kitamura H."/>
            <person name="Kitano H."/>
            <person name="Kollias G."/>
            <person name="Krishnan S.P."/>
            <person name="Kruger A."/>
            <person name="Kummerfeld S.K."/>
            <person name="Kurochkin I.V."/>
            <person name="Lareau L.F."/>
            <person name="Lazarevic D."/>
            <person name="Lipovich L."/>
            <person name="Liu J."/>
            <person name="Liuni S."/>
            <person name="McWilliam S."/>
            <person name="Madan Babu M."/>
            <person name="Madera M."/>
            <person name="Marchionni L."/>
            <person name="Matsuda H."/>
            <person name="Matsuzawa S."/>
            <person name="Miki H."/>
            <person name="Mignone F."/>
            <person name="Miyake S."/>
            <person name="Morris K."/>
            <person name="Mottagui-Tabar S."/>
            <person name="Mulder N."/>
            <person name="Nakano N."/>
            <person name="Nakauchi H."/>
            <person name="Ng P."/>
            <person name="Nilsson R."/>
            <person name="Nishiguchi S."/>
            <person name="Nishikawa S."/>
            <person name="Nori F."/>
            <person name="Ohara O."/>
            <person name="Okazaki Y."/>
            <person name="Orlando V."/>
            <person name="Pang K.C."/>
            <person name="Pavan W.J."/>
            <person name="Pavesi G."/>
            <person name="Pesole G."/>
            <person name="Petrovsky N."/>
            <person name="Piazza S."/>
            <person name="Reed J."/>
            <person name="Reid J.F."/>
            <person name="Ring B.Z."/>
            <person name="Ringwald M."/>
            <person name="Rost B."/>
            <person name="Ruan Y."/>
            <person name="Salzberg S.L."/>
            <person name="Sandelin A."/>
            <person name="Schneider C."/>
            <person name="Schoenbach C."/>
            <person name="Sekiguchi K."/>
            <person name="Semple C.A."/>
            <person name="Seno S."/>
            <person name="Sessa L."/>
            <person name="Sheng Y."/>
            <person name="Shibata Y."/>
            <person name="Shimada H."/>
            <person name="Shimada K."/>
            <person name="Silva D."/>
            <person name="Sinclair B."/>
            <person name="Sperling S."/>
            <person name="Stupka E."/>
            <person name="Sugiura K."/>
            <person name="Sultana R."/>
            <person name="Takenaka Y."/>
            <person name="Taki K."/>
            <person name="Tammoja K."/>
            <person name="Tan S.L."/>
            <person name="Tang S."/>
            <person name="Taylor M.S."/>
            <person name="Tegner J."/>
            <person name="Teichmann S.A."/>
            <person name="Ueda H.R."/>
            <person name="van Nimwegen E."/>
            <person name="Verardo R."/>
            <person name="Wei C.L."/>
            <person name="Yagi K."/>
            <person name="Yamanishi H."/>
            <person name="Zabarovsky E."/>
            <person name="Zhu S."/>
            <person name="Zimmer A."/>
            <person name="Hide W."/>
            <person name="Bult C."/>
            <person name="Grimmond S.M."/>
            <person name="Teasdale R.D."/>
            <person name="Liu E.T."/>
            <person name="Brusic V."/>
            <person name="Quackenbush J."/>
            <person name="Wahlestedt C."/>
            <person name="Mattick J.S."/>
            <person name="Hume D.A."/>
            <person name="Kai C."/>
            <person name="Sasaki D."/>
            <person name="Tomaru Y."/>
            <person name="Fukuda S."/>
            <person name="Kanamori-Katayama M."/>
            <person name="Suzuki M."/>
            <person name="Aoki J."/>
            <person name="Arakawa T."/>
            <person name="Iida J."/>
            <person name="Imamura K."/>
            <person name="Itoh M."/>
            <person name="Kato T."/>
            <person name="Kawaji H."/>
            <person name="Kawagashira N."/>
            <person name="Kawashima T."/>
            <person name="Kojima M."/>
            <person name="Kondo S."/>
            <person name="Konno H."/>
            <person name="Nakano K."/>
            <person name="Ninomiya N."/>
            <person name="Nishio T."/>
            <person name="Okada M."/>
            <person name="Plessy C."/>
            <person name="Shibata K."/>
            <person name="Shiraki T."/>
            <person name="Suzuki S."/>
            <person name="Tagami M."/>
            <person name="Waki K."/>
            <person name="Watahiki A."/>
            <person name="Okamura-Oho Y."/>
            <person name="Suzuki H."/>
            <person name="Kawai J."/>
            <person name="Hayashizaki Y."/>
        </authorList>
    </citation>
    <scope>NUCLEOTIDE SEQUENCE [LARGE SCALE MRNA]</scope>
    <source>
        <strain>C57BL/6J</strain>
        <tissue>Cerebellum</tissue>
        <tissue>Embryonic stem cell</tissue>
        <tissue>Lung</tissue>
    </source>
</reference>
<reference key="3">
    <citation type="journal article" date="2004" name="Genome Res.">
        <title>The status, quality, and expansion of the NIH full-length cDNA project: the Mammalian Gene Collection (MGC).</title>
        <authorList>
            <consortium name="The MGC Project Team"/>
        </authorList>
    </citation>
    <scope>NUCLEOTIDE SEQUENCE [LARGE SCALE MRNA]</scope>
    <source>
        <strain>FVB/N</strain>
        <tissue>Embryo</tissue>
        <tissue>Mammary tumor</tissue>
    </source>
</reference>
<reference key="4">
    <citation type="journal article" date="2007" name="Mol. Cell. Proteomics">
        <title>Mitochondrial phosphoproteome revealed by an improved IMAC method and MS/MS/MS.</title>
        <authorList>
            <person name="Lee J."/>
            <person name="Xu Y."/>
            <person name="Chen Y."/>
            <person name="Sprung R."/>
            <person name="Kim S.C."/>
            <person name="Xie S."/>
            <person name="Zhao Y."/>
        </authorList>
    </citation>
    <scope>PHOSPHORYLATION [LARGE SCALE ANALYSIS] AT SER-32</scope>
    <scope>IDENTIFICATION BY MASS SPECTROMETRY [LARGE SCALE ANALYSIS]</scope>
    <source>
        <tissue>Liver</tissue>
    </source>
</reference>
<reference key="5">
    <citation type="journal article" date="2007" name="Proc. Natl. Acad. Sci. U.S.A.">
        <title>Large-scale phosphorylation analysis of mouse liver.</title>
        <authorList>
            <person name="Villen J."/>
            <person name="Beausoleil S.A."/>
            <person name="Gerber S.A."/>
            <person name="Gygi S.P."/>
        </authorList>
    </citation>
    <scope>PHOSPHORYLATION [LARGE SCALE ANALYSIS] AT SER-32</scope>
    <scope>IDENTIFICATION BY MASS SPECTROMETRY [LARGE SCALE ANALYSIS]</scope>
    <source>
        <tissue>Liver</tissue>
    </source>
</reference>
<reference key="6">
    <citation type="journal article" date="2008" name="J. Proteome Res.">
        <title>Specific phosphopeptide enrichment with immobilized titanium ion affinity chromatography adsorbent for phosphoproteome analysis.</title>
        <authorList>
            <person name="Zhou H."/>
            <person name="Ye M."/>
            <person name="Dong J."/>
            <person name="Han G."/>
            <person name="Jiang X."/>
            <person name="Wu R."/>
            <person name="Zou H."/>
        </authorList>
    </citation>
    <scope>PHOSPHORYLATION [LARGE SCALE ANALYSIS] AT SER-32</scope>
    <scope>IDENTIFICATION BY MASS SPECTROMETRY [LARGE SCALE ANALYSIS]</scope>
    <source>
        <tissue>Liver</tissue>
    </source>
</reference>
<reference key="7">
    <citation type="journal article" date="2009" name="Immunity">
        <title>The phagosomal proteome in interferon-gamma-activated macrophages.</title>
        <authorList>
            <person name="Trost M."/>
            <person name="English L."/>
            <person name="Lemieux S."/>
            <person name="Courcelles M."/>
            <person name="Desjardins M."/>
            <person name="Thibault P."/>
        </authorList>
    </citation>
    <scope>IDENTIFICATION BY MASS SPECTROMETRY [LARGE SCALE ANALYSIS]</scope>
</reference>
<reference key="8">
    <citation type="journal article" date="2010" name="Cell">
        <title>A tissue-specific atlas of mouse protein phosphorylation and expression.</title>
        <authorList>
            <person name="Huttlin E.L."/>
            <person name="Jedrychowski M.P."/>
            <person name="Elias J.E."/>
            <person name="Goswami T."/>
            <person name="Rad R."/>
            <person name="Beausoleil S.A."/>
            <person name="Villen J."/>
            <person name="Haas W."/>
            <person name="Sowa M.E."/>
            <person name="Gygi S.P."/>
        </authorList>
    </citation>
    <scope>PHOSPHORYLATION [LARGE SCALE ANALYSIS] AT SER-32; SER-36 AND THR-50</scope>
    <scope>IDENTIFICATION BY MASS SPECTROMETRY [LARGE SCALE ANALYSIS]</scope>
    <source>
        <tissue>Brain</tissue>
        <tissue>Brown adipose tissue</tissue>
        <tissue>Heart</tissue>
        <tissue>Kidney</tissue>
        <tissue>Liver</tissue>
        <tissue>Lung</tissue>
        <tissue>Pancreas</tissue>
        <tissue>Spleen</tissue>
        <tissue>Testis</tissue>
    </source>
</reference>
<reference key="9">
    <citation type="journal article" date="2016" name="J. Lipid Res.">
        <title>CDP-diacylglycerol synthases regulate the growth of lipid droplets and adipocyte development.</title>
        <authorList>
            <person name="Qi Y."/>
            <person name="Kapterian T.S."/>
            <person name="Du X."/>
            <person name="Ma Q."/>
            <person name="Fei W."/>
            <person name="Zhang Y."/>
            <person name="Huang X."/>
            <person name="Dawes I.W."/>
            <person name="Yang H."/>
        </authorList>
    </citation>
    <scope>FUNCTION</scope>
</reference>